<reference key="1">
    <citation type="journal article" date="2008" name="PLoS Genet.">
        <title>Complete genome sequence of the N2-fixing broad host range endophyte Klebsiella pneumoniae 342 and virulence predictions verified in mice.</title>
        <authorList>
            <person name="Fouts D.E."/>
            <person name="Tyler H.L."/>
            <person name="DeBoy R.T."/>
            <person name="Daugherty S."/>
            <person name="Ren Q."/>
            <person name="Badger J.H."/>
            <person name="Durkin A.S."/>
            <person name="Huot H."/>
            <person name="Shrivastava S."/>
            <person name="Kothari S."/>
            <person name="Dodson R.J."/>
            <person name="Mohamoud Y."/>
            <person name="Khouri H."/>
            <person name="Roesch L.F.W."/>
            <person name="Krogfelt K.A."/>
            <person name="Struve C."/>
            <person name="Triplett E.W."/>
            <person name="Methe B.A."/>
        </authorList>
    </citation>
    <scope>NUCLEOTIDE SEQUENCE [LARGE SCALE GENOMIC DNA]</scope>
    <source>
        <strain>342</strain>
    </source>
</reference>
<proteinExistence type="inferred from homology"/>
<accession>B5XXN3</accession>
<keyword id="KW-0378">Hydrolase</keyword>
<evidence type="ECO:0000255" key="1">
    <source>
        <dbReference type="HAMAP-Rule" id="MF_00832"/>
    </source>
</evidence>
<sequence>MRLNIAPAPWPGAPVVVLSAGLGGGGGYWLAQRAALEAQYQLVSYDHNGTGENAGPLPADYSMATMAQELLSALQAAGITRFALVGHALGALIGLQLALDRPEAVSALVLVNGWLTLSPHTRRCFLVRERLLHAGGAQAWVEAQPLFLYPAEWMAARLPRLEAEDALAISHFQGKENLLKRLQALKQADFSRRAAAIACPTLIVSAADDLLVPASCSRVLQAAIPGSQRVEMPWGGHACNVTDADTFNTILCDGLAAMLPVAREIR</sequence>
<feature type="chain" id="PRO_0000402967" description="Putative carbamate hydrolase RutD">
    <location>
        <begin position="1"/>
        <end position="266"/>
    </location>
</feature>
<feature type="domain" description="AB hydrolase-1" evidence="1">
    <location>
        <begin position="14"/>
        <end position="238"/>
    </location>
</feature>
<protein>
    <recommendedName>
        <fullName evidence="1">Putative carbamate hydrolase RutD</fullName>
        <ecNumber evidence="1">3.5.1.-</ecNumber>
    </recommendedName>
    <alternativeName>
        <fullName evidence="1">Aminohydrolase</fullName>
    </alternativeName>
</protein>
<dbReference type="EC" id="3.5.1.-" evidence="1"/>
<dbReference type="EMBL" id="CP000964">
    <property type="protein sequence ID" value="ACI11680.1"/>
    <property type="molecule type" value="Genomic_DNA"/>
</dbReference>
<dbReference type="SMR" id="B5XXN3"/>
<dbReference type="ESTHER" id="klep3-rutd">
    <property type="family name" value="RutD"/>
</dbReference>
<dbReference type="KEGG" id="kpe:KPK_3523"/>
<dbReference type="HOGENOM" id="CLU_020336_50_1_6"/>
<dbReference type="Proteomes" id="UP000001734">
    <property type="component" value="Chromosome"/>
</dbReference>
<dbReference type="GO" id="GO:0016811">
    <property type="term" value="F:hydrolase activity, acting on carbon-nitrogen (but not peptide) bonds, in linear amides"/>
    <property type="evidence" value="ECO:0007669"/>
    <property type="project" value="InterPro"/>
</dbReference>
<dbReference type="GO" id="GO:0019740">
    <property type="term" value="P:nitrogen utilization"/>
    <property type="evidence" value="ECO:0007669"/>
    <property type="project" value="UniProtKB-UniRule"/>
</dbReference>
<dbReference type="GO" id="GO:0006212">
    <property type="term" value="P:uracil catabolic process"/>
    <property type="evidence" value="ECO:0007669"/>
    <property type="project" value="UniProtKB-UniRule"/>
</dbReference>
<dbReference type="Gene3D" id="3.40.50.1820">
    <property type="entry name" value="alpha/beta hydrolase"/>
    <property type="match status" value="1"/>
</dbReference>
<dbReference type="HAMAP" id="MF_00832">
    <property type="entry name" value="RutD"/>
    <property type="match status" value="1"/>
</dbReference>
<dbReference type="InterPro" id="IPR000073">
    <property type="entry name" value="AB_hydrolase_1"/>
</dbReference>
<dbReference type="InterPro" id="IPR029058">
    <property type="entry name" value="AB_hydrolase_fold"/>
</dbReference>
<dbReference type="InterPro" id="IPR050228">
    <property type="entry name" value="Carboxylesterase_BioH"/>
</dbReference>
<dbReference type="InterPro" id="IPR019913">
    <property type="entry name" value="Pyrimidine_utilisation_RutD"/>
</dbReference>
<dbReference type="NCBIfam" id="TIGR03611">
    <property type="entry name" value="RutD"/>
    <property type="match status" value="1"/>
</dbReference>
<dbReference type="PANTHER" id="PTHR43194">
    <property type="entry name" value="HYDROLASE ALPHA/BETA FOLD FAMILY"/>
    <property type="match status" value="1"/>
</dbReference>
<dbReference type="PANTHER" id="PTHR43194:SF2">
    <property type="entry name" value="PEROXISOMAL MEMBRANE PROTEIN LPX1"/>
    <property type="match status" value="1"/>
</dbReference>
<dbReference type="Pfam" id="PF00561">
    <property type="entry name" value="Abhydrolase_1"/>
    <property type="match status" value="1"/>
</dbReference>
<dbReference type="PRINTS" id="PR00111">
    <property type="entry name" value="ABHYDROLASE"/>
</dbReference>
<dbReference type="SUPFAM" id="SSF53474">
    <property type="entry name" value="alpha/beta-Hydrolases"/>
    <property type="match status" value="1"/>
</dbReference>
<gene>
    <name evidence="1" type="primary">rutD</name>
    <name type="ordered locus">KPK_3523</name>
</gene>
<name>RUTD_KLEP3</name>
<comment type="function">
    <text evidence="1">Involved in pyrimidine catabolism. May facilitate the hydrolysis of carbamate, a reaction that can also occur spontaneously.</text>
</comment>
<comment type="catalytic activity">
    <reaction evidence="1">
        <text>carbamate + 2 H(+) = NH4(+) + CO2</text>
        <dbReference type="Rhea" id="RHEA:15649"/>
        <dbReference type="ChEBI" id="CHEBI:13941"/>
        <dbReference type="ChEBI" id="CHEBI:15378"/>
        <dbReference type="ChEBI" id="CHEBI:16526"/>
        <dbReference type="ChEBI" id="CHEBI:28938"/>
    </reaction>
</comment>
<comment type="similarity">
    <text evidence="1">Belongs to the AB hydrolase superfamily. Hydrolase RutD family.</text>
</comment>
<organism>
    <name type="scientific">Klebsiella pneumoniae (strain 342)</name>
    <dbReference type="NCBI Taxonomy" id="507522"/>
    <lineage>
        <taxon>Bacteria</taxon>
        <taxon>Pseudomonadati</taxon>
        <taxon>Pseudomonadota</taxon>
        <taxon>Gammaproteobacteria</taxon>
        <taxon>Enterobacterales</taxon>
        <taxon>Enterobacteriaceae</taxon>
        <taxon>Klebsiella/Raoultella group</taxon>
        <taxon>Klebsiella</taxon>
        <taxon>Klebsiella pneumoniae complex</taxon>
    </lineage>
</organism>